<reference key="1">
    <citation type="submission" date="2009-05" db="EMBL/GenBank/DDBJ databases">
        <title>Complete sequence of Tolumonas auensis DSM 9187.</title>
        <authorList>
            <consortium name="US DOE Joint Genome Institute"/>
            <person name="Lucas S."/>
            <person name="Copeland A."/>
            <person name="Lapidus A."/>
            <person name="Glavina del Rio T."/>
            <person name="Tice H."/>
            <person name="Bruce D."/>
            <person name="Goodwin L."/>
            <person name="Pitluck S."/>
            <person name="Chertkov O."/>
            <person name="Brettin T."/>
            <person name="Detter J.C."/>
            <person name="Han C."/>
            <person name="Larimer F."/>
            <person name="Land M."/>
            <person name="Hauser L."/>
            <person name="Kyrpides N."/>
            <person name="Mikhailova N."/>
            <person name="Spring S."/>
            <person name="Beller H."/>
        </authorList>
    </citation>
    <scope>NUCLEOTIDE SEQUENCE [LARGE SCALE GENOMIC DNA]</scope>
    <source>
        <strain>DSM 9187 / NBRC 110442 / TA 4</strain>
    </source>
</reference>
<keyword id="KW-0328">Glycosyltransferase</keyword>
<keyword id="KW-1185">Reference proteome</keyword>
<keyword id="KW-0808">Transferase</keyword>
<dbReference type="EC" id="2.4.2.1" evidence="1"/>
<dbReference type="EC" id="2.4.2.2" evidence="1"/>
<dbReference type="EMBL" id="CP001616">
    <property type="protein sequence ID" value="ACQ91822.1"/>
    <property type="molecule type" value="Genomic_DNA"/>
</dbReference>
<dbReference type="RefSeq" id="WP_012728421.1">
    <property type="nucleotide sequence ID" value="NC_012691.1"/>
</dbReference>
<dbReference type="SMR" id="C4L823"/>
<dbReference type="STRING" id="595494.Tola_0192"/>
<dbReference type="KEGG" id="tau:Tola_0192"/>
<dbReference type="eggNOG" id="COG3123">
    <property type="taxonomic scope" value="Bacteria"/>
</dbReference>
<dbReference type="HOGENOM" id="CLU_157874_0_0_6"/>
<dbReference type="OrthoDB" id="9793848at2"/>
<dbReference type="Proteomes" id="UP000009073">
    <property type="component" value="Chromosome"/>
</dbReference>
<dbReference type="GO" id="GO:0005829">
    <property type="term" value="C:cytosol"/>
    <property type="evidence" value="ECO:0007669"/>
    <property type="project" value="TreeGrafter"/>
</dbReference>
<dbReference type="GO" id="GO:0047975">
    <property type="term" value="F:guanosine phosphorylase activity"/>
    <property type="evidence" value="ECO:0007669"/>
    <property type="project" value="UniProtKB-EC"/>
</dbReference>
<dbReference type="GO" id="GO:0004731">
    <property type="term" value="F:purine-nucleoside phosphorylase activity"/>
    <property type="evidence" value="ECO:0007669"/>
    <property type="project" value="UniProtKB-UniRule"/>
</dbReference>
<dbReference type="GO" id="GO:0009032">
    <property type="term" value="F:thymidine phosphorylase activity"/>
    <property type="evidence" value="ECO:0007669"/>
    <property type="project" value="UniProtKB-EC"/>
</dbReference>
<dbReference type="GO" id="GO:0004850">
    <property type="term" value="F:uridine phosphorylase activity"/>
    <property type="evidence" value="ECO:0007669"/>
    <property type="project" value="UniProtKB-EC"/>
</dbReference>
<dbReference type="CDD" id="cd20296">
    <property type="entry name" value="cupin_PpnP-like"/>
    <property type="match status" value="1"/>
</dbReference>
<dbReference type="FunFam" id="2.60.120.10:FF:000016">
    <property type="entry name" value="Pyrimidine/purine nucleoside phosphorylase"/>
    <property type="match status" value="1"/>
</dbReference>
<dbReference type="Gene3D" id="2.60.120.10">
    <property type="entry name" value="Jelly Rolls"/>
    <property type="match status" value="1"/>
</dbReference>
<dbReference type="HAMAP" id="MF_01537">
    <property type="entry name" value="Nucleos_phosphorylase_PpnP"/>
    <property type="match status" value="1"/>
</dbReference>
<dbReference type="InterPro" id="IPR009664">
    <property type="entry name" value="Ppnp"/>
</dbReference>
<dbReference type="InterPro" id="IPR014710">
    <property type="entry name" value="RmlC-like_jellyroll"/>
</dbReference>
<dbReference type="InterPro" id="IPR011051">
    <property type="entry name" value="RmlC_Cupin_sf"/>
</dbReference>
<dbReference type="PANTHER" id="PTHR36540">
    <property type="entry name" value="PYRIMIDINE/PURINE NUCLEOSIDE PHOSPHORYLASE"/>
    <property type="match status" value="1"/>
</dbReference>
<dbReference type="PANTHER" id="PTHR36540:SF1">
    <property type="entry name" value="PYRIMIDINE_PURINE NUCLEOSIDE PHOSPHORYLASE"/>
    <property type="match status" value="1"/>
</dbReference>
<dbReference type="Pfam" id="PF06865">
    <property type="entry name" value="Ppnp"/>
    <property type="match status" value="1"/>
</dbReference>
<dbReference type="SUPFAM" id="SSF51182">
    <property type="entry name" value="RmlC-like cupins"/>
    <property type="match status" value="1"/>
</dbReference>
<evidence type="ECO:0000255" key="1">
    <source>
        <dbReference type="HAMAP-Rule" id="MF_01537"/>
    </source>
</evidence>
<protein>
    <recommendedName>
        <fullName evidence="1">Pyrimidine/purine nucleoside phosphorylase</fullName>
        <ecNumber evidence="1">2.4.2.1</ecNumber>
        <ecNumber evidence="1">2.4.2.2</ecNumber>
    </recommendedName>
    <alternativeName>
        <fullName evidence="1">Adenosine phosphorylase</fullName>
    </alternativeName>
    <alternativeName>
        <fullName evidence="1">Cytidine phosphorylase</fullName>
    </alternativeName>
    <alternativeName>
        <fullName evidence="1">Guanosine phosphorylase</fullName>
    </alternativeName>
    <alternativeName>
        <fullName evidence="1">Inosine phosphorylase</fullName>
    </alternativeName>
    <alternativeName>
        <fullName evidence="1">Thymidine phosphorylase</fullName>
    </alternativeName>
    <alternativeName>
        <fullName evidence="1">Uridine phosphorylase</fullName>
    </alternativeName>
    <alternativeName>
        <fullName evidence="1">Xanthosine phosphorylase</fullName>
    </alternativeName>
</protein>
<proteinExistence type="inferred from homology"/>
<name>PPNP_TOLAT</name>
<gene>
    <name evidence="1" type="primary">ppnP</name>
    <name type="ordered locus">Tola_0192</name>
</gene>
<sequence>MLQVNEYFSGNVKSIGFDLADQRATVGVMAPGEYEFGTGAPELMVVIRGALTVQLPGATEWQTFSAGQEFNVPGNSKFQLKVATDTAYLCEYK</sequence>
<accession>C4L823</accession>
<comment type="function">
    <text evidence="1">Catalyzes the phosphorolysis of diverse nucleosides, yielding D-ribose 1-phosphate and the respective free bases. Can use uridine, adenosine, guanosine, cytidine, thymidine, inosine and xanthosine as substrates. Also catalyzes the reverse reactions.</text>
</comment>
<comment type="catalytic activity">
    <reaction evidence="1">
        <text>a purine D-ribonucleoside + phosphate = a purine nucleobase + alpha-D-ribose 1-phosphate</text>
        <dbReference type="Rhea" id="RHEA:19805"/>
        <dbReference type="ChEBI" id="CHEBI:26386"/>
        <dbReference type="ChEBI" id="CHEBI:43474"/>
        <dbReference type="ChEBI" id="CHEBI:57720"/>
        <dbReference type="ChEBI" id="CHEBI:142355"/>
        <dbReference type="EC" id="2.4.2.1"/>
    </reaction>
</comment>
<comment type="catalytic activity">
    <reaction evidence="1">
        <text>adenosine + phosphate = alpha-D-ribose 1-phosphate + adenine</text>
        <dbReference type="Rhea" id="RHEA:27642"/>
        <dbReference type="ChEBI" id="CHEBI:16335"/>
        <dbReference type="ChEBI" id="CHEBI:16708"/>
        <dbReference type="ChEBI" id="CHEBI:43474"/>
        <dbReference type="ChEBI" id="CHEBI:57720"/>
        <dbReference type="EC" id="2.4.2.1"/>
    </reaction>
</comment>
<comment type="catalytic activity">
    <reaction evidence="1">
        <text>cytidine + phosphate = cytosine + alpha-D-ribose 1-phosphate</text>
        <dbReference type="Rhea" id="RHEA:52540"/>
        <dbReference type="ChEBI" id="CHEBI:16040"/>
        <dbReference type="ChEBI" id="CHEBI:17562"/>
        <dbReference type="ChEBI" id="CHEBI:43474"/>
        <dbReference type="ChEBI" id="CHEBI:57720"/>
        <dbReference type="EC" id="2.4.2.2"/>
    </reaction>
</comment>
<comment type="catalytic activity">
    <reaction evidence="1">
        <text>guanosine + phosphate = alpha-D-ribose 1-phosphate + guanine</text>
        <dbReference type="Rhea" id="RHEA:13233"/>
        <dbReference type="ChEBI" id="CHEBI:16235"/>
        <dbReference type="ChEBI" id="CHEBI:16750"/>
        <dbReference type="ChEBI" id="CHEBI:43474"/>
        <dbReference type="ChEBI" id="CHEBI:57720"/>
        <dbReference type="EC" id="2.4.2.1"/>
    </reaction>
</comment>
<comment type="catalytic activity">
    <reaction evidence="1">
        <text>inosine + phosphate = alpha-D-ribose 1-phosphate + hypoxanthine</text>
        <dbReference type="Rhea" id="RHEA:27646"/>
        <dbReference type="ChEBI" id="CHEBI:17368"/>
        <dbReference type="ChEBI" id="CHEBI:17596"/>
        <dbReference type="ChEBI" id="CHEBI:43474"/>
        <dbReference type="ChEBI" id="CHEBI:57720"/>
        <dbReference type="EC" id="2.4.2.1"/>
    </reaction>
</comment>
<comment type="catalytic activity">
    <reaction evidence="1">
        <text>thymidine + phosphate = 2-deoxy-alpha-D-ribose 1-phosphate + thymine</text>
        <dbReference type="Rhea" id="RHEA:16037"/>
        <dbReference type="ChEBI" id="CHEBI:17748"/>
        <dbReference type="ChEBI" id="CHEBI:17821"/>
        <dbReference type="ChEBI" id="CHEBI:43474"/>
        <dbReference type="ChEBI" id="CHEBI:57259"/>
        <dbReference type="EC" id="2.4.2.2"/>
    </reaction>
</comment>
<comment type="catalytic activity">
    <reaction evidence="1">
        <text>uridine + phosphate = alpha-D-ribose 1-phosphate + uracil</text>
        <dbReference type="Rhea" id="RHEA:24388"/>
        <dbReference type="ChEBI" id="CHEBI:16704"/>
        <dbReference type="ChEBI" id="CHEBI:17568"/>
        <dbReference type="ChEBI" id="CHEBI:43474"/>
        <dbReference type="ChEBI" id="CHEBI:57720"/>
        <dbReference type="EC" id="2.4.2.2"/>
    </reaction>
</comment>
<comment type="catalytic activity">
    <reaction evidence="1">
        <text>xanthosine + phosphate = alpha-D-ribose 1-phosphate + xanthine</text>
        <dbReference type="Rhea" id="RHEA:27638"/>
        <dbReference type="ChEBI" id="CHEBI:17712"/>
        <dbReference type="ChEBI" id="CHEBI:18107"/>
        <dbReference type="ChEBI" id="CHEBI:43474"/>
        <dbReference type="ChEBI" id="CHEBI:57720"/>
        <dbReference type="EC" id="2.4.2.1"/>
    </reaction>
</comment>
<comment type="similarity">
    <text evidence="1">Belongs to the nucleoside phosphorylase PpnP family.</text>
</comment>
<feature type="chain" id="PRO_1000215418" description="Pyrimidine/purine nucleoside phosphorylase">
    <location>
        <begin position="1"/>
        <end position="93"/>
    </location>
</feature>
<organism>
    <name type="scientific">Tolumonas auensis (strain DSM 9187 / NBRC 110442 / TA 4)</name>
    <dbReference type="NCBI Taxonomy" id="595494"/>
    <lineage>
        <taxon>Bacteria</taxon>
        <taxon>Pseudomonadati</taxon>
        <taxon>Pseudomonadota</taxon>
        <taxon>Gammaproteobacteria</taxon>
        <taxon>Aeromonadales</taxon>
        <taxon>Aeromonadaceae</taxon>
        <taxon>Tolumonas</taxon>
    </lineage>
</organism>